<sequence>MAQKPDGGAGLRGFQAEASVEDSALLVQTLMEAIQISEAPPTSQATAAASGPNASPQSSQPPTANEKADTEVSAAAARPKTGFKAQNATTKGPNDYSQARNAKEMPKNQSKAAFKSQNGTPKGPHAASDFSQAAPTGKSAKKSEMAFKGQNSTKAGPGTTYNFPQSPSANEMTNNQPKTAKAWNDTTKVPGADAQTQNVNQAKMADVGTSAGISEADGAAAQTSADGSQTQNVESRTIIRGKRTRKVNNLNVEENNSGDQRRASLASGNWRSAPVPVTTQQNPPGAPPNVVWQTPLAWQNPSGWQNQTARQTPPAARQSPPARQTPSAWQNPVAWQNPVIWPNPVIWQNPVIWPNPIVWPGPIVWPNPMAWQSTPGWQSPPSWQAPPSWQSPQDWQGPPDWQVPPDWSMPPDWSFPSDWPFPPDWIPADWPIPPDWQNLRPSPNLRSSSNSRASQNQGPPQPRDVALLQERANKLVKYLMLKDYTKVPIKRSEMLRDIIREYTDVYPEIIERACFVLEKKFGIQLKEIDKEEHLYILISTPESLAGILGTTKDTPKLGLLLVILGIIFMNGNRATEAVLWEALRKMGLRPGVRHPLLGDLRKLLTYEFVKQKYLDYRRVPNSNPPEYEFLWGLRSYHETSKMKVLRFIAEVQKRDPRDWTAQFMEAADEALDALDAAAAEAEARAEARNRMGIGDEAVSGPWSWDDIEFELLTWDEEGDFGDPWSRIPFTFWARYHQNARSRFPQAFTGPIIGPSGTATANFAANFGAIGFFWVE</sequence>
<dbReference type="EMBL" id="AB029448">
    <property type="protein sequence ID" value="BAA87959.1"/>
    <property type="molecule type" value="mRNA"/>
</dbReference>
<dbReference type="EMBL" id="AF319975">
    <property type="protein sequence ID" value="AAK01203.1"/>
    <property type="molecule type" value="mRNA"/>
</dbReference>
<dbReference type="EMBL" id="AK013231">
    <property type="status" value="NOT_ANNOTATED_CDS"/>
    <property type="molecule type" value="mRNA"/>
</dbReference>
<dbReference type="EMBL" id="AK017275">
    <property type="protein sequence ID" value="BAB30666.1"/>
    <property type="molecule type" value="mRNA"/>
</dbReference>
<dbReference type="EMBL" id="AK049660">
    <property type="protein sequence ID" value="BAC33863.1"/>
    <property type="molecule type" value="mRNA"/>
</dbReference>
<dbReference type="EMBL" id="AK132248">
    <property type="protein sequence ID" value="BAE21057.1"/>
    <property type="molecule type" value="mRNA"/>
</dbReference>
<dbReference type="EMBL" id="AK145872">
    <property type="protein sequence ID" value="BAE26714.1"/>
    <property type="molecule type" value="mRNA"/>
</dbReference>
<dbReference type="EMBL" id="AK146908">
    <property type="protein sequence ID" value="BAE27521.1"/>
    <property type="molecule type" value="mRNA"/>
</dbReference>
<dbReference type="CCDS" id="CCDS30280.1"/>
<dbReference type="RefSeq" id="NP_062765.1">
    <property type="nucleotide sequence ID" value="NM_019791.3"/>
</dbReference>
<dbReference type="SMR" id="Q9QYH6"/>
<dbReference type="BioGRID" id="220497">
    <property type="interactions" value="21"/>
</dbReference>
<dbReference type="CORUM" id="Q9QYH6"/>
<dbReference type="FunCoup" id="Q9QYH6">
    <property type="interactions" value="502"/>
</dbReference>
<dbReference type="IntAct" id="Q9QYH6">
    <property type="interactions" value="14"/>
</dbReference>
<dbReference type="MINT" id="Q9QYH6"/>
<dbReference type="STRING" id="10090.ENSMUSP00000026142"/>
<dbReference type="GlyGen" id="Q9QYH6">
    <property type="glycosylation" value="2 sites, 1 O-linked glycan (1 site)"/>
</dbReference>
<dbReference type="iPTMnet" id="Q9QYH6"/>
<dbReference type="PhosphoSitePlus" id="Q9QYH6"/>
<dbReference type="jPOST" id="Q9QYH6"/>
<dbReference type="PaxDb" id="10090-ENSMUSP00000026142"/>
<dbReference type="ProteomicsDB" id="292076"/>
<dbReference type="Pumba" id="Q9QYH6"/>
<dbReference type="Antibodypedia" id="4194">
    <property type="antibodies" value="357 antibodies from 36 providers"/>
</dbReference>
<dbReference type="DNASU" id="94275"/>
<dbReference type="Ensembl" id="ENSMUST00000026142.8">
    <property type="protein sequence ID" value="ENSMUSP00000026142.8"/>
    <property type="gene ID" value="ENSMUSG00000025151.17"/>
</dbReference>
<dbReference type="GeneID" id="94275"/>
<dbReference type="KEGG" id="mmu:94275"/>
<dbReference type="UCSC" id="uc009ttn.1">
    <property type="organism name" value="mouse"/>
</dbReference>
<dbReference type="AGR" id="MGI:1930187"/>
<dbReference type="CTD" id="9500"/>
<dbReference type="MGI" id="MGI:1930187">
    <property type="gene designation" value="Maged1"/>
</dbReference>
<dbReference type="VEuPathDB" id="HostDB:ENSMUSG00000025151"/>
<dbReference type="eggNOG" id="KOG4562">
    <property type="taxonomic scope" value="Eukaryota"/>
</dbReference>
<dbReference type="GeneTree" id="ENSGT00940000162070"/>
<dbReference type="HOGENOM" id="CLU_394113_0_0_1"/>
<dbReference type="InParanoid" id="Q9QYH6"/>
<dbReference type="OMA" id="PNPMAWQ"/>
<dbReference type="OrthoDB" id="205198at2759"/>
<dbReference type="PhylomeDB" id="Q9QYH6"/>
<dbReference type="TreeFam" id="TF352132"/>
<dbReference type="Reactome" id="R-MMU-9768919">
    <property type="pathway name" value="NPAS4 regulates expression of target genes"/>
</dbReference>
<dbReference type="BioGRID-ORCS" id="94275">
    <property type="hits" value="3 hits in 78 CRISPR screens"/>
</dbReference>
<dbReference type="ChiTaRS" id="Maged1">
    <property type="organism name" value="mouse"/>
</dbReference>
<dbReference type="PRO" id="PR:Q9QYH6"/>
<dbReference type="Proteomes" id="UP000000589">
    <property type="component" value="Chromosome X"/>
</dbReference>
<dbReference type="RNAct" id="Q9QYH6">
    <property type="molecule type" value="protein"/>
</dbReference>
<dbReference type="Bgee" id="ENSMUSG00000025151">
    <property type="expression patterns" value="Expressed in placenta labyrinth and 283 other cell types or tissues"/>
</dbReference>
<dbReference type="GO" id="GO:0000785">
    <property type="term" value="C:chromatin"/>
    <property type="evidence" value="ECO:0000314"/>
    <property type="project" value="UniProtKB"/>
</dbReference>
<dbReference type="GO" id="GO:0005829">
    <property type="term" value="C:cytosol"/>
    <property type="evidence" value="ECO:0000304"/>
    <property type="project" value="Reactome"/>
</dbReference>
<dbReference type="GO" id="GO:0005634">
    <property type="term" value="C:nucleus"/>
    <property type="evidence" value="ECO:0000314"/>
    <property type="project" value="UniProtKB"/>
</dbReference>
<dbReference type="GO" id="GO:0005886">
    <property type="term" value="C:plasma membrane"/>
    <property type="evidence" value="ECO:0007669"/>
    <property type="project" value="UniProtKB-SubCell"/>
</dbReference>
<dbReference type="GO" id="GO:0032991">
    <property type="term" value="C:protein-containing complex"/>
    <property type="evidence" value="ECO:0007669"/>
    <property type="project" value="Ensembl"/>
</dbReference>
<dbReference type="GO" id="GO:0042802">
    <property type="term" value="F:identical protein binding"/>
    <property type="evidence" value="ECO:0007669"/>
    <property type="project" value="Ensembl"/>
</dbReference>
<dbReference type="GO" id="GO:0003713">
    <property type="term" value="F:transcription coactivator activity"/>
    <property type="evidence" value="ECO:0000314"/>
    <property type="project" value="MGI"/>
</dbReference>
<dbReference type="GO" id="GO:0032922">
    <property type="term" value="P:circadian regulation of gene expression"/>
    <property type="evidence" value="ECO:0000315"/>
    <property type="project" value="UniProtKB"/>
</dbReference>
<dbReference type="GO" id="GO:0045892">
    <property type="term" value="P:negative regulation of DNA-templated transcription"/>
    <property type="evidence" value="ECO:0000315"/>
    <property type="project" value="UniProtKB"/>
</dbReference>
<dbReference type="GO" id="GO:0050680">
    <property type="term" value="P:negative regulation of epithelial cell proliferation"/>
    <property type="evidence" value="ECO:0007669"/>
    <property type="project" value="Ensembl"/>
</dbReference>
<dbReference type="GO" id="GO:1900181">
    <property type="term" value="P:negative regulation of protein localization to nucleus"/>
    <property type="evidence" value="ECO:0000314"/>
    <property type="project" value="MGI"/>
</dbReference>
<dbReference type="GO" id="GO:2001235">
    <property type="term" value="P:positive regulation of apoptotic signaling pathway"/>
    <property type="evidence" value="ECO:0000315"/>
    <property type="project" value="MGI"/>
</dbReference>
<dbReference type="GO" id="GO:0090190">
    <property type="term" value="P:positive regulation of branching involved in ureteric bud morphogenesis"/>
    <property type="evidence" value="ECO:0000315"/>
    <property type="project" value="UniProtKB"/>
</dbReference>
<dbReference type="GO" id="GO:0045893">
    <property type="term" value="P:positive regulation of DNA-templated transcription"/>
    <property type="evidence" value="ECO:0000315"/>
    <property type="project" value="UniProtKB"/>
</dbReference>
<dbReference type="GO" id="GO:0043406">
    <property type="term" value="P:positive regulation of MAP kinase activity"/>
    <property type="evidence" value="ECO:0000315"/>
    <property type="project" value="UniProtKB"/>
</dbReference>
<dbReference type="GO" id="GO:0034504">
    <property type="term" value="P:protein localization to nucleus"/>
    <property type="evidence" value="ECO:0000314"/>
    <property type="project" value="MGI"/>
</dbReference>
<dbReference type="GO" id="GO:0042752">
    <property type="term" value="P:regulation of circadian rhythm"/>
    <property type="evidence" value="ECO:0000315"/>
    <property type="project" value="UniProtKB"/>
</dbReference>
<dbReference type="GO" id="GO:0006357">
    <property type="term" value="P:regulation of transcription by RNA polymerase II"/>
    <property type="evidence" value="ECO:0000314"/>
    <property type="project" value="MGI"/>
</dbReference>
<dbReference type="FunFam" id="1.10.10.1200:FF:000001">
    <property type="entry name" value="Melanoma-associated antigen D1"/>
    <property type="match status" value="1"/>
</dbReference>
<dbReference type="FunFam" id="1.10.10.1210:FF:000001">
    <property type="entry name" value="melanoma-associated antigen D1"/>
    <property type="match status" value="1"/>
</dbReference>
<dbReference type="Gene3D" id="1.10.10.1200">
    <property type="entry name" value="MAGE homology domain, winged helix WH1 motif"/>
    <property type="match status" value="1"/>
</dbReference>
<dbReference type="Gene3D" id="1.10.10.1210">
    <property type="entry name" value="MAGE homology domain, winged helix WH2 motif"/>
    <property type="match status" value="1"/>
</dbReference>
<dbReference type="InterPro" id="IPR037445">
    <property type="entry name" value="MAGE"/>
</dbReference>
<dbReference type="InterPro" id="IPR041898">
    <property type="entry name" value="MAGE_WH1"/>
</dbReference>
<dbReference type="InterPro" id="IPR041899">
    <property type="entry name" value="MAGE_WH2"/>
</dbReference>
<dbReference type="InterPro" id="IPR002190">
    <property type="entry name" value="MHD_dom"/>
</dbReference>
<dbReference type="PANTHER" id="PTHR11736:SF28">
    <property type="entry name" value="MELANOMA-ASSOCIATED ANTIGEN D1"/>
    <property type="match status" value="1"/>
</dbReference>
<dbReference type="PANTHER" id="PTHR11736">
    <property type="entry name" value="MELANOMA-ASSOCIATED ANTIGEN MAGE ANTIGEN"/>
    <property type="match status" value="1"/>
</dbReference>
<dbReference type="Pfam" id="PF01454">
    <property type="entry name" value="MAGE"/>
    <property type="match status" value="1"/>
</dbReference>
<dbReference type="SMART" id="SM01373">
    <property type="entry name" value="MAGE"/>
    <property type="match status" value="1"/>
</dbReference>
<dbReference type="PROSITE" id="PS50838">
    <property type="entry name" value="MAGE"/>
    <property type="match status" value="1"/>
</dbReference>
<feature type="chain" id="PRO_0000156724" description="Melanoma-associated antigen D1">
    <location>
        <begin position="1"/>
        <end position="775"/>
    </location>
</feature>
<feature type="repeat" description="1">
    <location>
        <begin position="292"/>
        <end position="297"/>
    </location>
</feature>
<feature type="repeat" description="2">
    <location>
        <begin position="298"/>
        <end position="303"/>
    </location>
</feature>
<feature type="repeat" description="3">
    <location>
        <begin position="304"/>
        <end position="309"/>
    </location>
</feature>
<feature type="repeat" description="4">
    <location>
        <begin position="329"/>
        <end position="334"/>
    </location>
</feature>
<feature type="repeat" description="5">
    <location>
        <begin position="335"/>
        <end position="340"/>
    </location>
</feature>
<feature type="repeat" description="6">
    <location>
        <begin position="341"/>
        <end position="346"/>
    </location>
</feature>
<feature type="repeat" description="7">
    <location>
        <begin position="347"/>
        <end position="352"/>
    </location>
</feature>
<feature type="repeat" description="8">
    <location>
        <begin position="353"/>
        <end position="358"/>
    </location>
</feature>
<feature type="repeat" description="9">
    <location>
        <begin position="359"/>
        <end position="364"/>
    </location>
</feature>
<feature type="repeat" description="10">
    <location>
        <begin position="365"/>
        <end position="370"/>
    </location>
</feature>
<feature type="repeat" description="11">
    <location>
        <begin position="371"/>
        <end position="376"/>
    </location>
</feature>
<feature type="repeat" description="12">
    <location>
        <begin position="377"/>
        <end position="382"/>
    </location>
</feature>
<feature type="repeat" description="13">
    <location>
        <begin position="383"/>
        <end position="388"/>
    </location>
</feature>
<feature type="repeat" description="14">
    <location>
        <begin position="389"/>
        <end position="394"/>
    </location>
</feature>
<feature type="repeat" description="15">
    <location>
        <begin position="395"/>
        <end position="400"/>
    </location>
</feature>
<feature type="repeat" description="16">
    <location>
        <begin position="401"/>
        <end position="406"/>
    </location>
</feature>
<feature type="repeat" description="17">
    <location>
        <begin position="407"/>
        <end position="412"/>
    </location>
</feature>
<feature type="repeat" description="18">
    <location>
        <begin position="413"/>
        <end position="418"/>
    </location>
</feature>
<feature type="repeat" description="19">
    <location>
        <begin position="419"/>
        <end position="424"/>
    </location>
</feature>
<feature type="repeat" description="20; approximate">
    <location>
        <begin position="425"/>
        <end position="429"/>
    </location>
</feature>
<feature type="repeat" description="21">
    <location>
        <begin position="430"/>
        <end position="435"/>
    </location>
</feature>
<feature type="repeat" description="22">
    <location>
        <begin position="436"/>
        <end position="441"/>
    </location>
</feature>
<feature type="domain" description="MAGE" evidence="2">
    <location>
        <begin position="468"/>
        <end position="666"/>
    </location>
</feature>
<feature type="region of interest" description="Disordered" evidence="3">
    <location>
        <begin position="37"/>
        <end position="330"/>
    </location>
</feature>
<feature type="region of interest" description="22 X 6 AA tandem repeats of W-[PQ]-X-P-X-X">
    <location>
        <begin position="292"/>
        <end position="441"/>
    </location>
</feature>
<feature type="region of interest" description="Disordered" evidence="3">
    <location>
        <begin position="374"/>
        <end position="409"/>
    </location>
</feature>
<feature type="region of interest" description="Disordered" evidence="3">
    <location>
        <begin position="437"/>
        <end position="463"/>
    </location>
</feature>
<feature type="compositionally biased region" description="Low complexity" evidence="3">
    <location>
        <begin position="39"/>
        <end position="50"/>
    </location>
</feature>
<feature type="compositionally biased region" description="Polar residues" evidence="3">
    <location>
        <begin position="52"/>
        <end position="63"/>
    </location>
</feature>
<feature type="compositionally biased region" description="Polar residues" evidence="3">
    <location>
        <begin position="84"/>
        <end position="100"/>
    </location>
</feature>
<feature type="compositionally biased region" description="Polar residues" evidence="3">
    <location>
        <begin position="107"/>
        <end position="120"/>
    </location>
</feature>
<feature type="compositionally biased region" description="Polar residues" evidence="3">
    <location>
        <begin position="149"/>
        <end position="178"/>
    </location>
</feature>
<feature type="compositionally biased region" description="Polar residues" evidence="3">
    <location>
        <begin position="221"/>
        <end position="235"/>
    </location>
</feature>
<feature type="compositionally biased region" description="Polar residues" evidence="3">
    <location>
        <begin position="247"/>
        <end position="258"/>
    </location>
</feature>
<feature type="compositionally biased region" description="Polar residues" evidence="3">
    <location>
        <begin position="296"/>
        <end position="308"/>
    </location>
</feature>
<feature type="compositionally biased region" description="Low complexity" evidence="3">
    <location>
        <begin position="309"/>
        <end position="326"/>
    </location>
</feature>
<feature type="compositionally biased region" description="Low complexity" evidence="3">
    <location>
        <begin position="375"/>
        <end position="406"/>
    </location>
</feature>
<feature type="compositionally biased region" description="Low complexity" evidence="3">
    <location>
        <begin position="437"/>
        <end position="452"/>
    </location>
</feature>
<feature type="sequence conflict" description="In Ref. 2; AAK01203." evidence="5" ref="2">
    <location>
        <begin position="357"/>
        <end position="362"/>
    </location>
</feature>
<proteinExistence type="evidence at protein level"/>
<accession>Q9QYH6</accession>
<accession>Q543L6</accession>
<accession>Q99PB5</accession>
<accession>Q9CYX1</accession>
<name>MAGD1_MOUSE</name>
<comment type="function">
    <text evidence="4">Involved in the apoptotic response after nerve growth factor (NGF) binding in neuronal cells. Inhibits cell cycle progression, and facilitates NGFR-mediated apoptosis. May act as a regulator of the function of DLX family members. May enhance ubiquitin ligase activity of RING-type zinc finger-containing E3 ubiquitin-protein ligases. Proposed to act through recruitment and/or stabilization of the Ubl-conjugating enzyme (E2) at the E3:substrate complex. Plays a role in the circadian rhythm regulation. May act as RORA coregulator, modulating the expression of core clock genes such as BMAL1 and NFIL3, induced, or NR1D1, repressed.</text>
</comment>
<comment type="subunit">
    <text evidence="4">Interacts with DLX5, DLX7 and MSX2 and forms homomultimers. Interacts with UNC5A. Interacts with TRIM28 and PJA1. Interacts with NGFR/p75NTR and RORA.</text>
</comment>
<comment type="interaction">
    <interactant intactId="EBI-1801274">
        <id>Q9QYH6</id>
    </interactant>
    <interactant intactId="EBI-1801294">
        <id>P70396</id>
        <label>Dlx5</label>
    </interactant>
    <organismsDiffer>false</organismsDiffer>
    <experiments>2</experiments>
</comment>
<comment type="interaction">
    <interactant intactId="EBI-1801274">
        <id>Q9QYH6</id>
    </interactant>
    <interactant intactId="EBI-1801354">
        <id>Q03358</id>
        <label>Msx2</label>
    </interactant>
    <organismsDiffer>false</organismsDiffer>
    <experiments>5</experiments>
</comment>
<comment type="interaction">
    <interactant intactId="EBI-1801274">
        <id>Q9QYH6</id>
    </interactant>
    <interactant intactId="EBI-1801080">
        <id>P25233</id>
        <label>Ndn</label>
    </interactant>
    <organismsDiffer>false</organismsDiffer>
    <experiments>7</experiments>
</comment>
<comment type="interaction">
    <interactant intactId="EBI-1801274">
        <id>Q9QYH6</id>
    </interactant>
    <interactant intactId="EBI-1801670">
        <id>O55176-2</id>
        <label>Pja1</label>
    </interactant>
    <organismsDiffer>false</organismsDiffer>
    <experiments>2</experiments>
</comment>
<comment type="interaction">
    <interactant intactId="EBI-1801274">
        <id>Q9QYH6</id>
    </interactant>
    <interactant intactId="EBI-1169722">
        <id>P51448</id>
        <label>Rora</label>
    </interactant>
    <organismsDiffer>false</organismsDiffer>
    <experiments>5</experiments>
</comment>
<comment type="subcellular location">
    <subcellularLocation>
        <location evidence="4">Nucleus</location>
    </subcellularLocation>
    <subcellularLocation>
        <location evidence="1">Cytoplasm</location>
    </subcellularLocation>
    <subcellularLocation>
        <location evidence="1">Cell membrane</location>
        <topology evidence="1">Peripheral membrane protein</topology>
    </subcellularLocation>
    <text evidence="1">Expression shifts from the cytoplasm to the plasma membrane upon stimulation with NGF.</text>
</comment>
<comment type="tissue specificity">
    <text>Ubiquitously expressed in many adult tissues, except for the spleen. Expressed in osteoblastic and chondrogenic cell lines and also during embryonic development.</text>
</comment>
<comment type="disruption phenotype">
    <text evidence="4">Animals show shortened circadian period and reduced total activity.</text>
</comment>
<gene>
    <name type="primary">Maged1</name>
    <name type="synonym">Nrage</name>
</gene>
<protein>
    <recommendedName>
        <fullName>Melanoma-associated antigen D1</fullName>
    </recommendedName>
    <alternativeName>
        <fullName>Dlxin-1</fullName>
    </alternativeName>
    <alternativeName>
        <fullName>MAGE-D1 antigen</fullName>
    </alternativeName>
    <alternativeName>
        <fullName>Neurotrophin receptor-interacting MAGE homolog</fullName>
    </alternativeName>
</protein>
<reference key="1">
    <citation type="journal article" date="2001" name="J. Biol. Chem.">
        <title>Dlxin-1, a novel protein that binds Dlx5 and regulates its transcriptional function.</title>
        <authorList>
            <person name="Masuda Y."/>
            <person name="Sasaki A."/>
            <person name="Shibuya H."/>
            <person name="Ueno N."/>
            <person name="Ikeda K."/>
            <person name="Watanabe K."/>
        </authorList>
    </citation>
    <scope>NUCLEOTIDE SEQUENCE [MRNA]</scope>
    <source>
        <tissue>Embryo</tissue>
    </source>
</reference>
<reference key="2">
    <citation type="submission" date="2000-11" db="EMBL/GenBank/DDBJ databases">
        <title>Ten new murine members of the MAGE gene family.</title>
        <authorList>
            <person name="Auquier P.H."/>
            <person name="Chomez P.M."/>
            <person name="De Backer O.R."/>
            <person name="Bertrand M.J.M."/>
        </authorList>
    </citation>
    <scope>NUCLEOTIDE SEQUENCE [MRNA]</scope>
</reference>
<reference key="3">
    <citation type="journal article" date="2005" name="Science">
        <title>The transcriptional landscape of the mammalian genome.</title>
        <authorList>
            <person name="Carninci P."/>
            <person name="Kasukawa T."/>
            <person name="Katayama S."/>
            <person name="Gough J."/>
            <person name="Frith M.C."/>
            <person name="Maeda N."/>
            <person name="Oyama R."/>
            <person name="Ravasi T."/>
            <person name="Lenhard B."/>
            <person name="Wells C."/>
            <person name="Kodzius R."/>
            <person name="Shimokawa K."/>
            <person name="Bajic V.B."/>
            <person name="Brenner S.E."/>
            <person name="Batalov S."/>
            <person name="Forrest A.R."/>
            <person name="Zavolan M."/>
            <person name="Davis M.J."/>
            <person name="Wilming L.G."/>
            <person name="Aidinis V."/>
            <person name="Allen J.E."/>
            <person name="Ambesi-Impiombato A."/>
            <person name="Apweiler R."/>
            <person name="Aturaliya R.N."/>
            <person name="Bailey T.L."/>
            <person name="Bansal M."/>
            <person name="Baxter L."/>
            <person name="Beisel K.W."/>
            <person name="Bersano T."/>
            <person name="Bono H."/>
            <person name="Chalk A.M."/>
            <person name="Chiu K.P."/>
            <person name="Choudhary V."/>
            <person name="Christoffels A."/>
            <person name="Clutterbuck D.R."/>
            <person name="Crowe M.L."/>
            <person name="Dalla E."/>
            <person name="Dalrymple B.P."/>
            <person name="de Bono B."/>
            <person name="Della Gatta G."/>
            <person name="di Bernardo D."/>
            <person name="Down T."/>
            <person name="Engstrom P."/>
            <person name="Fagiolini M."/>
            <person name="Faulkner G."/>
            <person name="Fletcher C.F."/>
            <person name="Fukushima T."/>
            <person name="Furuno M."/>
            <person name="Futaki S."/>
            <person name="Gariboldi M."/>
            <person name="Georgii-Hemming P."/>
            <person name="Gingeras T.R."/>
            <person name="Gojobori T."/>
            <person name="Green R.E."/>
            <person name="Gustincich S."/>
            <person name="Harbers M."/>
            <person name="Hayashi Y."/>
            <person name="Hensch T.K."/>
            <person name="Hirokawa N."/>
            <person name="Hill D."/>
            <person name="Huminiecki L."/>
            <person name="Iacono M."/>
            <person name="Ikeo K."/>
            <person name="Iwama A."/>
            <person name="Ishikawa T."/>
            <person name="Jakt M."/>
            <person name="Kanapin A."/>
            <person name="Katoh M."/>
            <person name="Kawasawa Y."/>
            <person name="Kelso J."/>
            <person name="Kitamura H."/>
            <person name="Kitano H."/>
            <person name="Kollias G."/>
            <person name="Krishnan S.P."/>
            <person name="Kruger A."/>
            <person name="Kummerfeld S.K."/>
            <person name="Kurochkin I.V."/>
            <person name="Lareau L.F."/>
            <person name="Lazarevic D."/>
            <person name="Lipovich L."/>
            <person name="Liu J."/>
            <person name="Liuni S."/>
            <person name="McWilliam S."/>
            <person name="Madan Babu M."/>
            <person name="Madera M."/>
            <person name="Marchionni L."/>
            <person name="Matsuda H."/>
            <person name="Matsuzawa S."/>
            <person name="Miki H."/>
            <person name="Mignone F."/>
            <person name="Miyake S."/>
            <person name="Morris K."/>
            <person name="Mottagui-Tabar S."/>
            <person name="Mulder N."/>
            <person name="Nakano N."/>
            <person name="Nakauchi H."/>
            <person name="Ng P."/>
            <person name="Nilsson R."/>
            <person name="Nishiguchi S."/>
            <person name="Nishikawa S."/>
            <person name="Nori F."/>
            <person name="Ohara O."/>
            <person name="Okazaki Y."/>
            <person name="Orlando V."/>
            <person name="Pang K.C."/>
            <person name="Pavan W.J."/>
            <person name="Pavesi G."/>
            <person name="Pesole G."/>
            <person name="Petrovsky N."/>
            <person name="Piazza S."/>
            <person name="Reed J."/>
            <person name="Reid J.F."/>
            <person name="Ring B.Z."/>
            <person name="Ringwald M."/>
            <person name="Rost B."/>
            <person name="Ruan Y."/>
            <person name="Salzberg S.L."/>
            <person name="Sandelin A."/>
            <person name="Schneider C."/>
            <person name="Schoenbach C."/>
            <person name="Sekiguchi K."/>
            <person name="Semple C.A."/>
            <person name="Seno S."/>
            <person name="Sessa L."/>
            <person name="Sheng Y."/>
            <person name="Shibata Y."/>
            <person name="Shimada H."/>
            <person name="Shimada K."/>
            <person name="Silva D."/>
            <person name="Sinclair B."/>
            <person name="Sperling S."/>
            <person name="Stupka E."/>
            <person name="Sugiura K."/>
            <person name="Sultana R."/>
            <person name="Takenaka Y."/>
            <person name="Taki K."/>
            <person name="Tammoja K."/>
            <person name="Tan S.L."/>
            <person name="Tang S."/>
            <person name="Taylor M.S."/>
            <person name="Tegner J."/>
            <person name="Teichmann S.A."/>
            <person name="Ueda H.R."/>
            <person name="van Nimwegen E."/>
            <person name="Verardo R."/>
            <person name="Wei C.L."/>
            <person name="Yagi K."/>
            <person name="Yamanishi H."/>
            <person name="Zabarovsky E."/>
            <person name="Zhu S."/>
            <person name="Zimmer A."/>
            <person name="Hide W."/>
            <person name="Bult C."/>
            <person name="Grimmond S.M."/>
            <person name="Teasdale R.D."/>
            <person name="Liu E.T."/>
            <person name="Brusic V."/>
            <person name="Quackenbush J."/>
            <person name="Wahlestedt C."/>
            <person name="Mattick J.S."/>
            <person name="Hume D.A."/>
            <person name="Kai C."/>
            <person name="Sasaki D."/>
            <person name="Tomaru Y."/>
            <person name="Fukuda S."/>
            <person name="Kanamori-Katayama M."/>
            <person name="Suzuki M."/>
            <person name="Aoki J."/>
            <person name="Arakawa T."/>
            <person name="Iida J."/>
            <person name="Imamura K."/>
            <person name="Itoh M."/>
            <person name="Kato T."/>
            <person name="Kawaji H."/>
            <person name="Kawagashira N."/>
            <person name="Kawashima T."/>
            <person name="Kojima M."/>
            <person name="Kondo S."/>
            <person name="Konno H."/>
            <person name="Nakano K."/>
            <person name="Ninomiya N."/>
            <person name="Nishio T."/>
            <person name="Okada M."/>
            <person name="Plessy C."/>
            <person name="Shibata K."/>
            <person name="Shiraki T."/>
            <person name="Suzuki S."/>
            <person name="Tagami M."/>
            <person name="Waki K."/>
            <person name="Watahiki A."/>
            <person name="Okamura-Oho Y."/>
            <person name="Suzuki H."/>
            <person name="Kawai J."/>
            <person name="Hayashizaki Y."/>
        </authorList>
    </citation>
    <scope>NUCLEOTIDE SEQUENCE [LARGE SCALE MRNA]</scope>
    <source>
        <strain>C57BL/6J</strain>
        <tissue>Amnion</tissue>
        <tissue>Embryo</tissue>
        <tissue>Head</tissue>
        <tissue>Placenta</tissue>
        <tissue>Spinal cord</tissue>
    </source>
</reference>
<reference key="4">
    <citation type="journal article" date="2010" name="Cell">
        <title>A tissue-specific atlas of mouse protein phosphorylation and expression.</title>
        <authorList>
            <person name="Huttlin E.L."/>
            <person name="Jedrychowski M.P."/>
            <person name="Elias J.E."/>
            <person name="Goswami T."/>
            <person name="Rad R."/>
            <person name="Beausoleil S.A."/>
            <person name="Villen J."/>
            <person name="Haas W."/>
            <person name="Sowa M.E."/>
            <person name="Gygi S.P."/>
        </authorList>
    </citation>
    <scope>IDENTIFICATION BY MASS SPECTROMETRY [LARGE SCALE ANALYSIS]</scope>
    <source>
        <tissue>Brain</tissue>
        <tissue>Liver</tissue>
        <tissue>Lung</tissue>
        <tissue>Pancreas</tissue>
        <tissue>Testis</tissue>
    </source>
</reference>
<reference key="5">
    <citation type="journal article" date="2010" name="EMBO J.">
        <title>Interaction of MAGED1 with nuclear receptors affects circadian clock function.</title>
        <authorList>
            <person name="Wang X."/>
            <person name="Tang J."/>
            <person name="Xing L."/>
            <person name="Shi G."/>
            <person name="Ruan H."/>
            <person name="Gu X."/>
            <person name="Liu Z."/>
            <person name="Wu X."/>
            <person name="Gao X."/>
            <person name="Xu Y."/>
        </authorList>
    </citation>
    <scope>FUNCTION IN CIRCADIAN RHYTHMS REGULATION</scope>
    <scope>INTERACTION WITH RORA</scope>
    <scope>DISRUPTION PHENOTYPE</scope>
    <scope>SUBCELLULAR LOCATION</scope>
</reference>
<evidence type="ECO:0000250" key="1"/>
<evidence type="ECO:0000255" key="2">
    <source>
        <dbReference type="PROSITE-ProRule" id="PRU00127"/>
    </source>
</evidence>
<evidence type="ECO:0000256" key="3">
    <source>
        <dbReference type="SAM" id="MobiDB-lite"/>
    </source>
</evidence>
<evidence type="ECO:0000269" key="4">
    <source>
    </source>
</evidence>
<evidence type="ECO:0000305" key="5"/>
<keyword id="KW-0090">Biological rhythms</keyword>
<keyword id="KW-1003">Cell membrane</keyword>
<keyword id="KW-0963">Cytoplasm</keyword>
<keyword id="KW-0472">Membrane</keyword>
<keyword id="KW-0539">Nucleus</keyword>
<keyword id="KW-1185">Reference proteome</keyword>
<keyword id="KW-0677">Repeat</keyword>
<keyword id="KW-0825">Tumor antigen</keyword>
<keyword id="KW-0833">Ubl conjugation pathway</keyword>
<organism>
    <name type="scientific">Mus musculus</name>
    <name type="common">Mouse</name>
    <dbReference type="NCBI Taxonomy" id="10090"/>
    <lineage>
        <taxon>Eukaryota</taxon>
        <taxon>Metazoa</taxon>
        <taxon>Chordata</taxon>
        <taxon>Craniata</taxon>
        <taxon>Vertebrata</taxon>
        <taxon>Euteleostomi</taxon>
        <taxon>Mammalia</taxon>
        <taxon>Eutheria</taxon>
        <taxon>Euarchontoglires</taxon>
        <taxon>Glires</taxon>
        <taxon>Rodentia</taxon>
        <taxon>Myomorpha</taxon>
        <taxon>Muroidea</taxon>
        <taxon>Muridae</taxon>
        <taxon>Murinae</taxon>
        <taxon>Mus</taxon>
        <taxon>Mus</taxon>
    </lineage>
</organism>